<evidence type="ECO:0000255" key="1">
    <source>
        <dbReference type="HAMAP-Rule" id="MF_00127"/>
    </source>
</evidence>
<name>SYH_CYTH3</name>
<gene>
    <name evidence="1" type="primary">hisS</name>
    <name type="ordered locus">CHU_2673</name>
</gene>
<comment type="catalytic activity">
    <reaction evidence="1">
        <text>tRNA(His) + L-histidine + ATP = L-histidyl-tRNA(His) + AMP + diphosphate + H(+)</text>
        <dbReference type="Rhea" id="RHEA:17313"/>
        <dbReference type="Rhea" id="RHEA-COMP:9665"/>
        <dbReference type="Rhea" id="RHEA-COMP:9689"/>
        <dbReference type="ChEBI" id="CHEBI:15378"/>
        <dbReference type="ChEBI" id="CHEBI:30616"/>
        <dbReference type="ChEBI" id="CHEBI:33019"/>
        <dbReference type="ChEBI" id="CHEBI:57595"/>
        <dbReference type="ChEBI" id="CHEBI:78442"/>
        <dbReference type="ChEBI" id="CHEBI:78527"/>
        <dbReference type="ChEBI" id="CHEBI:456215"/>
        <dbReference type="EC" id="6.1.1.21"/>
    </reaction>
</comment>
<comment type="subunit">
    <text evidence="1">Homodimer.</text>
</comment>
<comment type="subcellular location">
    <subcellularLocation>
        <location evidence="1">Cytoplasm</location>
    </subcellularLocation>
</comment>
<comment type="similarity">
    <text evidence="1">Belongs to the class-II aminoacyl-tRNA synthetase family.</text>
</comment>
<accession>Q11RN9</accession>
<sequence>MEKPSLPKGTRDFGPAQMLKRQYLLQTIREIFTKYGFLPIETPAMENLSVLTGKYGDEGDQLIYKILNSGDFIQGVEQNHLQEGYKKLIPKISKKALRYDLTVPFARHVVMNRNDITFPFKRYQIQPVWRADRPQKGRYCEFMQCDADVVGTDSLLCEAEIVLMIHEAFAALGITDFVVKINNRKILSGIADAIGKEGSEAELCVAIDKLDKIGKEAVLEELKTKGFTDSQLTRLLPVFDLKGNNAEIFPLLRTILAQSSVGLKGIDELEKVFTLIEKSGLGNASIETDLTLARGLSYYTGAIFEVKILNVQMGSVCGGGRYDNLTGVFGLPNVSGVGISFGIDRIYDVMNELNLFPSQESNSTRLLICAFDENTFMHALPMVTKLRAQGINTELYPDPVKIKKQLSYADDKKIPFALLIGEDEMNQGLYSLKNLISGEQFKVTFDEVVHKLI</sequence>
<dbReference type="EC" id="6.1.1.21" evidence="1"/>
<dbReference type="EMBL" id="CP000383">
    <property type="protein sequence ID" value="ABG59925.1"/>
    <property type="molecule type" value="Genomic_DNA"/>
</dbReference>
<dbReference type="RefSeq" id="WP_011586035.1">
    <property type="nucleotide sequence ID" value="NC_008255.1"/>
</dbReference>
<dbReference type="SMR" id="Q11RN9"/>
<dbReference type="STRING" id="269798.CHU_2673"/>
<dbReference type="KEGG" id="chu:CHU_2673"/>
<dbReference type="eggNOG" id="COG0124">
    <property type="taxonomic scope" value="Bacteria"/>
</dbReference>
<dbReference type="HOGENOM" id="CLU_025113_3_0_10"/>
<dbReference type="OrthoDB" id="9800814at2"/>
<dbReference type="Proteomes" id="UP000001822">
    <property type="component" value="Chromosome"/>
</dbReference>
<dbReference type="GO" id="GO:0005737">
    <property type="term" value="C:cytoplasm"/>
    <property type="evidence" value="ECO:0007669"/>
    <property type="project" value="UniProtKB-SubCell"/>
</dbReference>
<dbReference type="GO" id="GO:0005524">
    <property type="term" value="F:ATP binding"/>
    <property type="evidence" value="ECO:0007669"/>
    <property type="project" value="UniProtKB-UniRule"/>
</dbReference>
<dbReference type="GO" id="GO:0004821">
    <property type="term" value="F:histidine-tRNA ligase activity"/>
    <property type="evidence" value="ECO:0007669"/>
    <property type="project" value="UniProtKB-UniRule"/>
</dbReference>
<dbReference type="GO" id="GO:0006427">
    <property type="term" value="P:histidyl-tRNA aminoacylation"/>
    <property type="evidence" value="ECO:0007669"/>
    <property type="project" value="UniProtKB-UniRule"/>
</dbReference>
<dbReference type="CDD" id="cd00773">
    <property type="entry name" value="HisRS-like_core"/>
    <property type="match status" value="1"/>
</dbReference>
<dbReference type="CDD" id="cd00859">
    <property type="entry name" value="HisRS_anticodon"/>
    <property type="match status" value="1"/>
</dbReference>
<dbReference type="FunFam" id="3.30.930.10:FF:000093">
    <property type="entry name" value="Histidine--tRNA ligase"/>
    <property type="match status" value="1"/>
</dbReference>
<dbReference type="Gene3D" id="3.40.50.800">
    <property type="entry name" value="Anticodon-binding domain"/>
    <property type="match status" value="1"/>
</dbReference>
<dbReference type="Gene3D" id="3.30.930.10">
    <property type="entry name" value="Bira Bifunctional Protein, Domain 2"/>
    <property type="match status" value="1"/>
</dbReference>
<dbReference type="HAMAP" id="MF_00127">
    <property type="entry name" value="His_tRNA_synth"/>
    <property type="match status" value="1"/>
</dbReference>
<dbReference type="InterPro" id="IPR006195">
    <property type="entry name" value="aa-tRNA-synth_II"/>
</dbReference>
<dbReference type="InterPro" id="IPR045864">
    <property type="entry name" value="aa-tRNA-synth_II/BPL/LPL"/>
</dbReference>
<dbReference type="InterPro" id="IPR004154">
    <property type="entry name" value="Anticodon-bd"/>
</dbReference>
<dbReference type="InterPro" id="IPR036621">
    <property type="entry name" value="Anticodon-bd_dom_sf"/>
</dbReference>
<dbReference type="InterPro" id="IPR015807">
    <property type="entry name" value="His-tRNA-ligase"/>
</dbReference>
<dbReference type="InterPro" id="IPR041715">
    <property type="entry name" value="HisRS-like_core"/>
</dbReference>
<dbReference type="InterPro" id="IPR004516">
    <property type="entry name" value="HisRS/HisZ"/>
</dbReference>
<dbReference type="InterPro" id="IPR033656">
    <property type="entry name" value="HisRS_anticodon"/>
</dbReference>
<dbReference type="NCBIfam" id="TIGR00442">
    <property type="entry name" value="hisS"/>
    <property type="match status" value="1"/>
</dbReference>
<dbReference type="PANTHER" id="PTHR11476:SF7">
    <property type="entry name" value="HISTIDINE--TRNA LIGASE"/>
    <property type="match status" value="1"/>
</dbReference>
<dbReference type="PANTHER" id="PTHR11476">
    <property type="entry name" value="HISTIDYL-TRNA SYNTHETASE"/>
    <property type="match status" value="1"/>
</dbReference>
<dbReference type="Pfam" id="PF03129">
    <property type="entry name" value="HGTP_anticodon"/>
    <property type="match status" value="1"/>
</dbReference>
<dbReference type="Pfam" id="PF13393">
    <property type="entry name" value="tRNA-synt_His"/>
    <property type="match status" value="1"/>
</dbReference>
<dbReference type="PIRSF" id="PIRSF001549">
    <property type="entry name" value="His-tRNA_synth"/>
    <property type="match status" value="1"/>
</dbReference>
<dbReference type="SUPFAM" id="SSF52954">
    <property type="entry name" value="Class II aaRS ABD-related"/>
    <property type="match status" value="1"/>
</dbReference>
<dbReference type="SUPFAM" id="SSF55681">
    <property type="entry name" value="Class II aaRS and biotin synthetases"/>
    <property type="match status" value="1"/>
</dbReference>
<dbReference type="PROSITE" id="PS50862">
    <property type="entry name" value="AA_TRNA_LIGASE_II"/>
    <property type="match status" value="1"/>
</dbReference>
<proteinExistence type="inferred from homology"/>
<feature type="chain" id="PRO_1000016350" description="Histidine--tRNA ligase">
    <location>
        <begin position="1"/>
        <end position="453"/>
    </location>
</feature>
<organism>
    <name type="scientific">Cytophaga hutchinsonii (strain ATCC 33406 / DSM 1761 / CIP 103989 / NBRC 15051 / NCIMB 9469 / D465)</name>
    <dbReference type="NCBI Taxonomy" id="269798"/>
    <lineage>
        <taxon>Bacteria</taxon>
        <taxon>Pseudomonadati</taxon>
        <taxon>Bacteroidota</taxon>
        <taxon>Cytophagia</taxon>
        <taxon>Cytophagales</taxon>
        <taxon>Cytophagaceae</taxon>
        <taxon>Cytophaga</taxon>
    </lineage>
</organism>
<protein>
    <recommendedName>
        <fullName evidence="1">Histidine--tRNA ligase</fullName>
        <ecNumber evidence="1">6.1.1.21</ecNumber>
    </recommendedName>
    <alternativeName>
        <fullName evidence="1">Histidyl-tRNA synthetase</fullName>
        <shortName evidence="1">HisRS</shortName>
    </alternativeName>
</protein>
<reference key="1">
    <citation type="journal article" date="2007" name="Appl. Environ. Microbiol.">
        <title>Genome sequence of the cellulolytic gliding bacterium Cytophaga hutchinsonii.</title>
        <authorList>
            <person name="Xie G."/>
            <person name="Bruce D.C."/>
            <person name="Challacombe J.F."/>
            <person name="Chertkov O."/>
            <person name="Detter J.C."/>
            <person name="Gilna P."/>
            <person name="Han C.S."/>
            <person name="Lucas S."/>
            <person name="Misra M."/>
            <person name="Myers G.L."/>
            <person name="Richardson P."/>
            <person name="Tapia R."/>
            <person name="Thayer N."/>
            <person name="Thompson L.S."/>
            <person name="Brettin T.S."/>
            <person name="Henrissat B."/>
            <person name="Wilson D.B."/>
            <person name="McBride M.J."/>
        </authorList>
    </citation>
    <scope>NUCLEOTIDE SEQUENCE [LARGE SCALE GENOMIC DNA]</scope>
    <source>
        <strain>ATCC 33406 / DSM 1761 / JCM 20678 / CIP 103989 / IAM 12607 / NBRC 15051 / NCIMB 9469 / D465</strain>
    </source>
</reference>
<keyword id="KW-0030">Aminoacyl-tRNA synthetase</keyword>
<keyword id="KW-0067">ATP-binding</keyword>
<keyword id="KW-0963">Cytoplasm</keyword>
<keyword id="KW-0436">Ligase</keyword>
<keyword id="KW-0547">Nucleotide-binding</keyword>
<keyword id="KW-0648">Protein biosynthesis</keyword>
<keyword id="KW-1185">Reference proteome</keyword>